<name>KATG_FRATN</name>
<accession>A0Q5L1</accession>
<reference key="1">
    <citation type="journal article" date="2007" name="Genome Biol.">
        <title>Comparison of Francisella tularensis genomes reveals evolutionary events associated with the emergence of human pathogenic strains.</title>
        <authorList>
            <person name="Rohmer L."/>
            <person name="Fong C."/>
            <person name="Abmayr S."/>
            <person name="Wasnick M."/>
            <person name="Larson Freeman T.J."/>
            <person name="Radey M."/>
            <person name="Guina T."/>
            <person name="Svensson K."/>
            <person name="Hayden H.S."/>
            <person name="Jacobs M."/>
            <person name="Gallagher L.A."/>
            <person name="Manoil C."/>
            <person name="Ernst R.K."/>
            <person name="Drees B."/>
            <person name="Buckley D."/>
            <person name="Haugen E."/>
            <person name="Bovee D."/>
            <person name="Zhou Y."/>
            <person name="Chang J."/>
            <person name="Levy R."/>
            <person name="Lim R."/>
            <person name="Gillett W."/>
            <person name="Guenthener D."/>
            <person name="Kang A."/>
            <person name="Shaffer S.A."/>
            <person name="Taylor G."/>
            <person name="Chen J."/>
            <person name="Gallis B."/>
            <person name="D'Argenio D.A."/>
            <person name="Forsman M."/>
            <person name="Olson M.V."/>
            <person name="Goodlett D.R."/>
            <person name="Kaul R."/>
            <person name="Miller S.I."/>
            <person name="Brittnacher M.J."/>
        </authorList>
    </citation>
    <scope>NUCLEOTIDE SEQUENCE [LARGE SCALE GENOMIC DNA]</scope>
    <source>
        <strain>U112</strain>
    </source>
</reference>
<gene>
    <name evidence="1" type="primary">katG</name>
    <name type="ordered locus">FTN_0633</name>
</gene>
<proteinExistence type="inferred from homology"/>
<protein>
    <recommendedName>
        <fullName evidence="1">Catalase-peroxidase</fullName>
        <shortName evidence="1">CP</shortName>
        <ecNumber evidence="1">1.11.1.21</ecNumber>
    </recommendedName>
    <alternativeName>
        <fullName evidence="1">Peroxidase/catalase</fullName>
    </alternativeName>
</protein>
<dbReference type="EC" id="1.11.1.21" evidence="1"/>
<dbReference type="EMBL" id="CP000439">
    <property type="protein sequence ID" value="ABK89526.1"/>
    <property type="molecule type" value="Genomic_DNA"/>
</dbReference>
<dbReference type="RefSeq" id="WP_003038704.1">
    <property type="nucleotide sequence ID" value="NC_008601.1"/>
</dbReference>
<dbReference type="SMR" id="A0Q5L1"/>
<dbReference type="KEGG" id="ftn:FTN_0633"/>
<dbReference type="KEGG" id="ftx:AW25_1393"/>
<dbReference type="BioCyc" id="FTUL401614:G1G75-658-MONOMER"/>
<dbReference type="Proteomes" id="UP000000762">
    <property type="component" value="Chromosome"/>
</dbReference>
<dbReference type="GO" id="GO:0005829">
    <property type="term" value="C:cytosol"/>
    <property type="evidence" value="ECO:0007669"/>
    <property type="project" value="TreeGrafter"/>
</dbReference>
<dbReference type="GO" id="GO:0004096">
    <property type="term" value="F:catalase activity"/>
    <property type="evidence" value="ECO:0007669"/>
    <property type="project" value="UniProtKB-UniRule"/>
</dbReference>
<dbReference type="GO" id="GO:0020037">
    <property type="term" value="F:heme binding"/>
    <property type="evidence" value="ECO:0007669"/>
    <property type="project" value="InterPro"/>
</dbReference>
<dbReference type="GO" id="GO:0046872">
    <property type="term" value="F:metal ion binding"/>
    <property type="evidence" value="ECO:0007669"/>
    <property type="project" value="UniProtKB-KW"/>
</dbReference>
<dbReference type="GO" id="GO:0070301">
    <property type="term" value="P:cellular response to hydrogen peroxide"/>
    <property type="evidence" value="ECO:0007669"/>
    <property type="project" value="TreeGrafter"/>
</dbReference>
<dbReference type="GO" id="GO:0042744">
    <property type="term" value="P:hydrogen peroxide catabolic process"/>
    <property type="evidence" value="ECO:0007669"/>
    <property type="project" value="UniProtKB-KW"/>
</dbReference>
<dbReference type="CDD" id="cd00649">
    <property type="entry name" value="catalase_peroxidase_1"/>
    <property type="match status" value="1"/>
</dbReference>
<dbReference type="CDD" id="cd08200">
    <property type="entry name" value="catalase_peroxidase_2"/>
    <property type="match status" value="1"/>
</dbReference>
<dbReference type="Gene3D" id="1.10.520.10">
    <property type="match status" value="2"/>
</dbReference>
<dbReference type="Gene3D" id="1.10.420.10">
    <property type="entry name" value="Peroxidase, domain 2"/>
    <property type="match status" value="2"/>
</dbReference>
<dbReference type="HAMAP" id="MF_01961">
    <property type="entry name" value="Catal_peroxid"/>
    <property type="match status" value="1"/>
</dbReference>
<dbReference type="InterPro" id="IPR000763">
    <property type="entry name" value="Catalase_peroxidase"/>
</dbReference>
<dbReference type="InterPro" id="IPR002016">
    <property type="entry name" value="Haem_peroxidase"/>
</dbReference>
<dbReference type="InterPro" id="IPR010255">
    <property type="entry name" value="Haem_peroxidase_sf"/>
</dbReference>
<dbReference type="InterPro" id="IPR019794">
    <property type="entry name" value="Peroxidases_AS"/>
</dbReference>
<dbReference type="InterPro" id="IPR019793">
    <property type="entry name" value="Peroxidases_heam-ligand_BS"/>
</dbReference>
<dbReference type="NCBIfam" id="TIGR00198">
    <property type="entry name" value="cat_per_HPI"/>
    <property type="match status" value="1"/>
</dbReference>
<dbReference type="NCBIfam" id="NF011635">
    <property type="entry name" value="PRK15061.1"/>
    <property type="match status" value="1"/>
</dbReference>
<dbReference type="PANTHER" id="PTHR30555:SF0">
    <property type="entry name" value="CATALASE-PEROXIDASE"/>
    <property type="match status" value="1"/>
</dbReference>
<dbReference type="PANTHER" id="PTHR30555">
    <property type="entry name" value="HYDROPEROXIDASE I, BIFUNCTIONAL CATALASE-PEROXIDASE"/>
    <property type="match status" value="1"/>
</dbReference>
<dbReference type="Pfam" id="PF00141">
    <property type="entry name" value="peroxidase"/>
    <property type="match status" value="2"/>
</dbReference>
<dbReference type="PRINTS" id="PR00460">
    <property type="entry name" value="BPEROXIDASE"/>
</dbReference>
<dbReference type="PRINTS" id="PR00458">
    <property type="entry name" value="PEROXIDASE"/>
</dbReference>
<dbReference type="SUPFAM" id="SSF48113">
    <property type="entry name" value="Heme-dependent peroxidases"/>
    <property type="match status" value="2"/>
</dbReference>
<dbReference type="PROSITE" id="PS00435">
    <property type="entry name" value="PEROXIDASE_1"/>
    <property type="match status" value="1"/>
</dbReference>
<dbReference type="PROSITE" id="PS00436">
    <property type="entry name" value="PEROXIDASE_2"/>
    <property type="match status" value="1"/>
</dbReference>
<dbReference type="PROSITE" id="PS50873">
    <property type="entry name" value="PEROXIDASE_4"/>
    <property type="match status" value="1"/>
</dbReference>
<keyword id="KW-0349">Heme</keyword>
<keyword id="KW-0376">Hydrogen peroxide</keyword>
<keyword id="KW-0408">Iron</keyword>
<keyword id="KW-0479">Metal-binding</keyword>
<keyword id="KW-0560">Oxidoreductase</keyword>
<keyword id="KW-0575">Peroxidase</keyword>
<keyword id="KW-0732">Signal</keyword>
<evidence type="ECO:0000255" key="1">
    <source>
        <dbReference type="HAMAP-Rule" id="MF_01961"/>
    </source>
</evidence>
<organism>
    <name type="scientific">Francisella tularensis subsp. novicida (strain U112)</name>
    <dbReference type="NCBI Taxonomy" id="401614"/>
    <lineage>
        <taxon>Bacteria</taxon>
        <taxon>Pseudomonadati</taxon>
        <taxon>Pseudomonadota</taxon>
        <taxon>Gammaproteobacteria</taxon>
        <taxon>Thiotrichales</taxon>
        <taxon>Francisellaceae</taxon>
        <taxon>Francisella</taxon>
    </lineage>
</organism>
<comment type="function">
    <text evidence="1">Bifunctional enzyme with both catalase and broad-spectrum peroxidase activity.</text>
</comment>
<comment type="catalytic activity">
    <reaction evidence="1">
        <text>H2O2 + AH2 = A + 2 H2O</text>
        <dbReference type="Rhea" id="RHEA:30275"/>
        <dbReference type="ChEBI" id="CHEBI:13193"/>
        <dbReference type="ChEBI" id="CHEBI:15377"/>
        <dbReference type="ChEBI" id="CHEBI:16240"/>
        <dbReference type="ChEBI" id="CHEBI:17499"/>
        <dbReference type="EC" id="1.11.1.21"/>
    </reaction>
</comment>
<comment type="catalytic activity">
    <reaction evidence="1">
        <text>2 H2O2 = O2 + 2 H2O</text>
        <dbReference type="Rhea" id="RHEA:20309"/>
        <dbReference type="ChEBI" id="CHEBI:15377"/>
        <dbReference type="ChEBI" id="CHEBI:15379"/>
        <dbReference type="ChEBI" id="CHEBI:16240"/>
        <dbReference type="EC" id="1.11.1.21"/>
    </reaction>
</comment>
<comment type="cofactor">
    <cofactor evidence="1">
        <name>heme b</name>
        <dbReference type="ChEBI" id="CHEBI:60344"/>
    </cofactor>
    <text evidence="1">Binds 1 heme b (iron(II)-protoporphyrin IX) group per dimer.</text>
</comment>
<comment type="subunit">
    <text evidence="1">Homodimer or homotetramer.</text>
</comment>
<comment type="PTM">
    <text evidence="1">Formation of the three residue Trp-Tyr-Met cross-link is important for the catalase, but not the peroxidase activity of the enzyme.</text>
</comment>
<comment type="similarity">
    <text evidence="1">Belongs to the peroxidase family. Peroxidase/catalase subfamily.</text>
</comment>
<feature type="signal peptide" evidence="1">
    <location>
        <begin position="1"/>
        <end position="23"/>
    </location>
</feature>
<feature type="chain" id="PRO_0000354793" description="Catalase-peroxidase">
    <location>
        <begin position="24"/>
        <end position="739"/>
    </location>
</feature>
<feature type="active site" description="Proton acceptor" evidence="1">
    <location>
        <position position="101"/>
    </location>
</feature>
<feature type="binding site" description="axial binding residue" evidence="1">
    <location>
        <position position="262"/>
    </location>
    <ligand>
        <name>heme b</name>
        <dbReference type="ChEBI" id="CHEBI:60344"/>
    </ligand>
    <ligandPart>
        <name>Fe</name>
        <dbReference type="ChEBI" id="CHEBI:18248"/>
    </ligandPart>
</feature>
<feature type="site" description="Transition state stabilizer" evidence="1">
    <location>
        <position position="97"/>
    </location>
</feature>
<feature type="cross-link" description="Tryptophyl-tyrosyl-methioninium (Trp-Tyr) (with M-247)" evidence="1">
    <location>
        <begin position="100"/>
        <end position="221"/>
    </location>
</feature>
<feature type="cross-link" description="Tryptophyl-tyrosyl-methioninium (Tyr-Met) (with W-100)" evidence="1">
    <location>
        <begin position="221"/>
        <end position="247"/>
    </location>
</feature>
<sequence length="739" mass="82132">MLKKIVTALGMSGMLLASNSAIADDKNTETATPQSVDLSPLRNLNKLDSPMDKDYNYHQAFKKLDPEQLKKDMQDLLTQSQDWWPADFGNYGPFFIRLSWHDAGTYRIYDGRGGANRGQQRFSPLNSWPDNVNLDKARQLLWPIKQKYGDAVSWSDLIVLAGTVSLESMGMKPIGFAFGREDDWQGDDTNWGLSPEEIMSSNVRDGKLAPAYAATQMGLIYVNPEGPDGKPDIKGAASEIRQAFRAMGMTDKETVALIAGGHTFGKTHGAVPEDKVKEAIGPAPDKAPIEQQGLGWHNSYGTGNGDDTMGSGLEGSWTSTPTFWNHDFLHNLYNLNWKKTLSPAGAHQWTPTNAKPENMVPDAHKLGVKHKPIMFTTDLALKEDDGFNKYTQEFYNNPEEFKEEFAKAWFKLTHRDMGPKSRYIGPWIPEQNFIWQDPVPAADYKQVSTQDIAQLKQDIIDSGLTNQQLIKTAWDSASTYRKTDYRGGSNGARIALAPEKDWQMNEPAKLEVVLAKLKEIQTNFNNSKTDGTKVSLADLIVLGGNVGVEQAAKQAGYNIQIPFVPGRTDATQAQTDIESFNYLKTKSDGFINYTDGSVSADKLPQALVEKASMLDLNIPEMTVLVGGMRALNVNYDNSQEGVLTTTPGQLNNSFFVNLLDMSTQWKKSDKKDGEYIGIGRKTGKQKWTASPVDLIFGSNSELKAVAQVYAENGNEQKFVNDFAKAWHKVMMLGRFDVQQ</sequence>